<comment type="function">
    <text evidence="1 2 3">Acts as an activator of both rRNA/tRNA and protein methyltransferases (By similarity). Required for TRM9 tRNA methyltransferase activity (PubMed:21653555). Involved in the regulation of cell division progression during organ growth. Required for the expression of cell cycle-related genes, and the G2-M phase progression during organogenesis (PubMed:19929876).</text>
</comment>
<comment type="subunit">
    <text evidence="3">Interacts with TRM9.</text>
</comment>
<comment type="disruption phenotype">
    <text evidence="2">Semi-dwarf phenotype. Reduced organ growth due to inhibition of cell proliferation.</text>
</comment>
<comment type="similarity">
    <text evidence="6">Belongs to the TRM112 family.</text>
</comment>
<comment type="sequence caution" evidence="6">
    <conflict type="erroneous gene model prediction">
        <sequence resource="EMBL-CDS" id="AAF87264"/>
    </conflict>
    <text>The predicted gene At1g22270 has been split into 2 genes: At1g22270 and At1g22275.</text>
</comment>
<sequence>MRLITHNMLSCNIKGVTSGFPLRIEAGNVIEKEVDFNPDFIRHMFAKIEWKALVEGARSMGYAELPEESPDAAVLKSDEPFLKKLHHALLELHLEEGALVCPETGRKFPVNKGIPNMLLHEDEV</sequence>
<protein>
    <recommendedName>
        <fullName evidence="6">Multifunctional methyltransferase subunit TRM112 homolog A</fullName>
    </recommendedName>
    <alternativeName>
        <fullName evidence="6">Multifunctional methyltransferase subunit TRM112-like protein At1g22270</fullName>
    </alternativeName>
    <alternativeName>
        <fullName evidence="4">Protein SMALL ORGAN 2</fullName>
    </alternativeName>
    <alternativeName>
        <fullName evidence="6">tRNA methyltransferase 112 homolog A</fullName>
        <shortName evidence="5">AtTRM112a</shortName>
    </alternativeName>
</protein>
<keyword id="KW-1185">Reference proteome</keyword>
<proteinExistence type="evidence at protein level"/>
<feature type="chain" id="PRO_0000215801" description="Multifunctional methyltransferase subunit TRM112 homolog A">
    <location>
        <begin position="1"/>
        <end position="124"/>
    </location>
</feature>
<feature type="domain" description="TRM112">
    <location>
        <begin position="2"/>
        <end position="120"/>
    </location>
</feature>
<feature type="sequence conflict" description="In Ref. 4; BAD43792/BAD43819." evidence="6" ref="4">
    <original>N</original>
    <variation>S</variation>
    <location>
        <position position="28"/>
    </location>
</feature>
<evidence type="ECO:0000250" key="1">
    <source>
        <dbReference type="UniProtKB" id="P53738"/>
    </source>
</evidence>
<evidence type="ECO:0000269" key="2">
    <source>
    </source>
</evidence>
<evidence type="ECO:0000269" key="3">
    <source>
    </source>
</evidence>
<evidence type="ECO:0000303" key="4">
    <source>
    </source>
</evidence>
<evidence type="ECO:0000303" key="5">
    <source>
    </source>
</evidence>
<evidence type="ECO:0000305" key="6"/>
<evidence type="ECO:0000312" key="7">
    <source>
        <dbReference type="Araport" id="AT1G22270"/>
    </source>
</evidence>
<evidence type="ECO:0000312" key="8">
    <source>
        <dbReference type="EMBL" id="AAF87264.1"/>
    </source>
</evidence>
<organism>
    <name type="scientific">Arabidopsis thaliana</name>
    <name type="common">Mouse-ear cress</name>
    <dbReference type="NCBI Taxonomy" id="3702"/>
    <lineage>
        <taxon>Eukaryota</taxon>
        <taxon>Viridiplantae</taxon>
        <taxon>Streptophyta</taxon>
        <taxon>Embryophyta</taxon>
        <taxon>Tracheophyta</taxon>
        <taxon>Spermatophyta</taxon>
        <taxon>Magnoliopsida</taxon>
        <taxon>eudicotyledons</taxon>
        <taxon>Gunneridae</taxon>
        <taxon>Pentapetalae</taxon>
        <taxon>rosids</taxon>
        <taxon>malvids</taxon>
        <taxon>Brassicales</taxon>
        <taxon>Brassicaceae</taxon>
        <taxon>Camelineae</taxon>
        <taxon>Arabidopsis</taxon>
    </lineage>
</organism>
<reference key="1">
    <citation type="journal article" date="2000" name="Nature">
        <title>Sequence and analysis of chromosome 1 of the plant Arabidopsis thaliana.</title>
        <authorList>
            <person name="Theologis A."/>
            <person name="Ecker J.R."/>
            <person name="Palm C.J."/>
            <person name="Federspiel N.A."/>
            <person name="Kaul S."/>
            <person name="White O."/>
            <person name="Alonso J."/>
            <person name="Altafi H."/>
            <person name="Araujo R."/>
            <person name="Bowman C.L."/>
            <person name="Brooks S.Y."/>
            <person name="Buehler E."/>
            <person name="Chan A."/>
            <person name="Chao Q."/>
            <person name="Chen H."/>
            <person name="Cheuk R.F."/>
            <person name="Chin C.W."/>
            <person name="Chung M.K."/>
            <person name="Conn L."/>
            <person name="Conway A.B."/>
            <person name="Conway A.R."/>
            <person name="Creasy T.H."/>
            <person name="Dewar K."/>
            <person name="Dunn P."/>
            <person name="Etgu P."/>
            <person name="Feldblyum T.V."/>
            <person name="Feng J.-D."/>
            <person name="Fong B."/>
            <person name="Fujii C.Y."/>
            <person name="Gill J.E."/>
            <person name="Goldsmith A.D."/>
            <person name="Haas B."/>
            <person name="Hansen N.F."/>
            <person name="Hughes B."/>
            <person name="Huizar L."/>
            <person name="Hunter J.L."/>
            <person name="Jenkins J."/>
            <person name="Johnson-Hopson C."/>
            <person name="Khan S."/>
            <person name="Khaykin E."/>
            <person name="Kim C.J."/>
            <person name="Koo H.L."/>
            <person name="Kremenetskaia I."/>
            <person name="Kurtz D.B."/>
            <person name="Kwan A."/>
            <person name="Lam B."/>
            <person name="Langin-Hooper S."/>
            <person name="Lee A."/>
            <person name="Lee J.M."/>
            <person name="Lenz C.A."/>
            <person name="Li J.H."/>
            <person name="Li Y.-P."/>
            <person name="Lin X."/>
            <person name="Liu S.X."/>
            <person name="Liu Z.A."/>
            <person name="Luros J.S."/>
            <person name="Maiti R."/>
            <person name="Marziali A."/>
            <person name="Militscher J."/>
            <person name="Miranda M."/>
            <person name="Nguyen M."/>
            <person name="Nierman W.C."/>
            <person name="Osborne B.I."/>
            <person name="Pai G."/>
            <person name="Peterson J."/>
            <person name="Pham P.K."/>
            <person name="Rizzo M."/>
            <person name="Rooney T."/>
            <person name="Rowley D."/>
            <person name="Sakano H."/>
            <person name="Salzberg S.L."/>
            <person name="Schwartz J.R."/>
            <person name="Shinn P."/>
            <person name="Southwick A.M."/>
            <person name="Sun H."/>
            <person name="Tallon L.J."/>
            <person name="Tambunga G."/>
            <person name="Toriumi M.J."/>
            <person name="Town C.D."/>
            <person name="Utterback T."/>
            <person name="Van Aken S."/>
            <person name="Vaysberg M."/>
            <person name="Vysotskaia V.S."/>
            <person name="Walker M."/>
            <person name="Wu D."/>
            <person name="Yu G."/>
            <person name="Fraser C.M."/>
            <person name="Venter J.C."/>
            <person name="Davis R.W."/>
        </authorList>
    </citation>
    <scope>NUCLEOTIDE SEQUENCE [LARGE SCALE GENOMIC DNA]</scope>
    <source>
        <strain>cv. Columbia</strain>
    </source>
</reference>
<reference key="2">
    <citation type="journal article" date="2017" name="Plant J.">
        <title>Araport11: a complete reannotation of the Arabidopsis thaliana reference genome.</title>
        <authorList>
            <person name="Cheng C.Y."/>
            <person name="Krishnakumar V."/>
            <person name="Chan A.P."/>
            <person name="Thibaud-Nissen F."/>
            <person name="Schobel S."/>
            <person name="Town C.D."/>
        </authorList>
    </citation>
    <scope>GENOME REANNOTATION</scope>
    <source>
        <strain>cv. Columbia</strain>
    </source>
</reference>
<reference key="3">
    <citation type="journal article" date="2003" name="Science">
        <title>Empirical analysis of transcriptional activity in the Arabidopsis genome.</title>
        <authorList>
            <person name="Yamada K."/>
            <person name="Lim J."/>
            <person name="Dale J.M."/>
            <person name="Chen H."/>
            <person name="Shinn P."/>
            <person name="Palm C.J."/>
            <person name="Southwick A.M."/>
            <person name="Wu H.C."/>
            <person name="Kim C.J."/>
            <person name="Nguyen M."/>
            <person name="Pham P.K."/>
            <person name="Cheuk R.F."/>
            <person name="Karlin-Newmann G."/>
            <person name="Liu S.X."/>
            <person name="Lam B."/>
            <person name="Sakano H."/>
            <person name="Wu T."/>
            <person name="Yu G."/>
            <person name="Miranda M."/>
            <person name="Quach H.L."/>
            <person name="Tripp M."/>
            <person name="Chang C.H."/>
            <person name="Lee J.M."/>
            <person name="Toriumi M.J."/>
            <person name="Chan M.M."/>
            <person name="Tang C.C."/>
            <person name="Onodera C.S."/>
            <person name="Deng J.M."/>
            <person name="Akiyama K."/>
            <person name="Ansari Y."/>
            <person name="Arakawa T."/>
            <person name="Banh J."/>
            <person name="Banno F."/>
            <person name="Bowser L."/>
            <person name="Brooks S.Y."/>
            <person name="Carninci P."/>
            <person name="Chao Q."/>
            <person name="Choy N."/>
            <person name="Enju A."/>
            <person name="Goldsmith A.D."/>
            <person name="Gurjal M."/>
            <person name="Hansen N.F."/>
            <person name="Hayashizaki Y."/>
            <person name="Johnson-Hopson C."/>
            <person name="Hsuan V.W."/>
            <person name="Iida K."/>
            <person name="Karnes M."/>
            <person name="Khan S."/>
            <person name="Koesema E."/>
            <person name="Ishida J."/>
            <person name="Jiang P.X."/>
            <person name="Jones T."/>
            <person name="Kawai J."/>
            <person name="Kamiya A."/>
            <person name="Meyers C."/>
            <person name="Nakajima M."/>
            <person name="Narusaka M."/>
            <person name="Seki M."/>
            <person name="Sakurai T."/>
            <person name="Satou M."/>
            <person name="Tamse R."/>
            <person name="Vaysberg M."/>
            <person name="Wallender E.K."/>
            <person name="Wong C."/>
            <person name="Yamamura Y."/>
            <person name="Yuan S."/>
            <person name="Shinozaki K."/>
            <person name="Davis R.W."/>
            <person name="Theologis A."/>
            <person name="Ecker J.R."/>
        </authorList>
    </citation>
    <scope>NUCLEOTIDE SEQUENCE [LARGE SCALE MRNA]</scope>
    <source>
        <strain>cv. Columbia</strain>
    </source>
</reference>
<reference key="4">
    <citation type="submission" date="2006-07" db="EMBL/GenBank/DDBJ databases">
        <title>Large-scale analysis of RIKEN Arabidopsis full-length (RAFL) cDNAs.</title>
        <authorList>
            <person name="Totoki Y."/>
            <person name="Seki M."/>
            <person name="Ishida J."/>
            <person name="Nakajima M."/>
            <person name="Enju A."/>
            <person name="Kamiya A."/>
            <person name="Narusaka M."/>
            <person name="Shin-i T."/>
            <person name="Nakagawa M."/>
            <person name="Sakamoto N."/>
            <person name="Oishi K."/>
            <person name="Kohara Y."/>
            <person name="Kobayashi M."/>
            <person name="Toyoda A."/>
            <person name="Sakaki Y."/>
            <person name="Sakurai T."/>
            <person name="Iida K."/>
            <person name="Akiyama K."/>
            <person name="Satou M."/>
            <person name="Toyoda T."/>
            <person name="Konagaya A."/>
            <person name="Carninci P."/>
            <person name="Kawai J."/>
            <person name="Hayashizaki Y."/>
            <person name="Shinozaki K."/>
        </authorList>
    </citation>
    <scope>NUCLEOTIDE SEQUENCE [LARGE SCALE MRNA]</scope>
    <source>
        <strain>cv. Columbia</strain>
    </source>
</reference>
<reference key="5">
    <citation type="submission" date="2002-03" db="EMBL/GenBank/DDBJ databases">
        <title>Full-length cDNA from Arabidopsis thaliana.</title>
        <authorList>
            <person name="Brover V.V."/>
            <person name="Troukhan M.E."/>
            <person name="Alexandrov N.A."/>
            <person name="Lu Y.-P."/>
            <person name="Flavell R.B."/>
            <person name="Feldmann K.A."/>
        </authorList>
    </citation>
    <scope>NUCLEOTIDE SEQUENCE [LARGE SCALE MRNA]</scope>
</reference>
<reference key="6">
    <citation type="journal article" date="2010" name="Plant J.">
        <title>The Arabidopsis SMO2, a homologue of yeast TRM112, modulates progression of cell division during organ growth.</title>
        <authorList>
            <person name="Hu Z."/>
            <person name="Qin Z."/>
            <person name="Wang M."/>
            <person name="Xu C."/>
            <person name="Feng G."/>
            <person name="Liu J."/>
            <person name="Meng Z."/>
            <person name="Hu Y."/>
        </authorList>
    </citation>
    <scope>FUNCTION</scope>
    <scope>DISRUPTION PHENOTYPE</scope>
</reference>
<reference key="7">
    <citation type="journal article" date="2011" name="Nucleic Acids Res.">
        <title>Roles of Trm9- and ALKBH8-like proteins in the formation of modified wobble uridines in Arabidopsis tRNA.</title>
        <authorList>
            <person name="Leihne V."/>
            <person name="Kirpekar F."/>
            <person name="Vaagboe C.B."/>
            <person name="van den Born E."/>
            <person name="Krokan H.E."/>
            <person name="Grini P.E."/>
            <person name="Meza T.J."/>
            <person name="Falnes P.O."/>
        </authorList>
    </citation>
    <scope>FUNCTION</scope>
    <scope>INTERACTION WITH TRM9</scope>
</reference>
<accession>Q8LFJ5</accession>
<accession>Q67ZR1</accession>
<accession>Q681G4</accession>
<accession>Q9LME3</accession>
<gene>
    <name evidence="5" type="primary">TRM112A</name>
    <name evidence="4" type="synonym">SMO2</name>
    <name evidence="7" type="ordered locus">At1g22270</name>
    <name evidence="8" type="ORF">T16E15.11</name>
</gene>
<name>T112A_ARATH</name>
<dbReference type="EMBL" id="AC068562">
    <property type="protein sequence ID" value="AAF87264.1"/>
    <property type="status" value="ALT_SEQ"/>
    <property type="molecule type" value="Genomic_DNA"/>
</dbReference>
<dbReference type="EMBL" id="CP002684">
    <property type="protein sequence ID" value="AEE30218.1"/>
    <property type="molecule type" value="Genomic_DNA"/>
</dbReference>
<dbReference type="EMBL" id="BT006386">
    <property type="protein sequence ID" value="AAP21194.1"/>
    <property type="molecule type" value="mRNA"/>
</dbReference>
<dbReference type="EMBL" id="AK227723">
    <property type="protein sequence ID" value="BAE99709.1"/>
    <property type="molecule type" value="mRNA"/>
</dbReference>
<dbReference type="EMBL" id="AK175143">
    <property type="protein sequence ID" value="BAD42906.1"/>
    <property type="molecule type" value="mRNA"/>
</dbReference>
<dbReference type="EMBL" id="AK175653">
    <property type="protein sequence ID" value="BAD43416.1"/>
    <property type="molecule type" value="mRNA"/>
</dbReference>
<dbReference type="EMBL" id="AK175662">
    <property type="protein sequence ID" value="BAD43425.1"/>
    <property type="molecule type" value="mRNA"/>
</dbReference>
<dbReference type="EMBL" id="AK175824">
    <property type="protein sequence ID" value="BAD43587.1"/>
    <property type="molecule type" value="mRNA"/>
</dbReference>
<dbReference type="EMBL" id="AK176029">
    <property type="protein sequence ID" value="BAD43792.1"/>
    <property type="molecule type" value="mRNA"/>
</dbReference>
<dbReference type="EMBL" id="AK176056">
    <property type="protein sequence ID" value="BAD43819.1"/>
    <property type="molecule type" value="mRNA"/>
</dbReference>
<dbReference type="EMBL" id="AK176229">
    <property type="protein sequence ID" value="BAD43992.1"/>
    <property type="molecule type" value="mRNA"/>
</dbReference>
<dbReference type="EMBL" id="AK176275">
    <property type="protein sequence ID" value="BAD44038.1"/>
    <property type="molecule type" value="mRNA"/>
</dbReference>
<dbReference type="EMBL" id="AY084809">
    <property type="protein sequence ID" value="AAM61375.1"/>
    <property type="molecule type" value="mRNA"/>
</dbReference>
<dbReference type="PIR" id="E86355">
    <property type="entry name" value="E86355"/>
</dbReference>
<dbReference type="RefSeq" id="NP_564163.1">
    <property type="nucleotide sequence ID" value="NM_102077.5"/>
</dbReference>
<dbReference type="SMR" id="Q8LFJ5"/>
<dbReference type="BioGRID" id="24072">
    <property type="interactions" value="1"/>
</dbReference>
<dbReference type="FunCoup" id="Q8LFJ5">
    <property type="interactions" value="3455"/>
</dbReference>
<dbReference type="IntAct" id="Q8LFJ5">
    <property type="interactions" value="1"/>
</dbReference>
<dbReference type="STRING" id="3702.Q8LFJ5"/>
<dbReference type="PaxDb" id="3702-AT1G22270.1"/>
<dbReference type="ProteomicsDB" id="245268"/>
<dbReference type="DNASU" id="838833"/>
<dbReference type="EnsemblPlants" id="AT1G22270.1">
    <property type="protein sequence ID" value="AT1G22270.1"/>
    <property type="gene ID" value="AT1G22270"/>
</dbReference>
<dbReference type="GeneID" id="838833"/>
<dbReference type="Gramene" id="AT1G22270.1">
    <property type="protein sequence ID" value="AT1G22270.1"/>
    <property type="gene ID" value="AT1G22270"/>
</dbReference>
<dbReference type="KEGG" id="ath:AT1G22270"/>
<dbReference type="Araport" id="AT1G22270"/>
<dbReference type="TAIR" id="AT1G22270">
    <property type="gene designation" value="TRM112B"/>
</dbReference>
<dbReference type="eggNOG" id="KOG1088">
    <property type="taxonomic scope" value="Eukaryota"/>
</dbReference>
<dbReference type="HOGENOM" id="CLU_086140_2_0_1"/>
<dbReference type="InParanoid" id="Q8LFJ5"/>
<dbReference type="OMA" id="NMLTSKC"/>
<dbReference type="OrthoDB" id="2187549at2759"/>
<dbReference type="PhylomeDB" id="Q8LFJ5"/>
<dbReference type="CD-CODE" id="4299E36E">
    <property type="entry name" value="Nucleolus"/>
</dbReference>
<dbReference type="PRO" id="PR:Q8LFJ5"/>
<dbReference type="Proteomes" id="UP000006548">
    <property type="component" value="Chromosome 1"/>
</dbReference>
<dbReference type="ExpressionAtlas" id="Q8LFJ5">
    <property type="expression patterns" value="baseline and differential"/>
</dbReference>
<dbReference type="GO" id="GO:0046982">
    <property type="term" value="F:protein heterodimerization activity"/>
    <property type="evidence" value="ECO:0007669"/>
    <property type="project" value="InterPro"/>
</dbReference>
<dbReference type="GO" id="GO:0035265">
    <property type="term" value="P:organ growth"/>
    <property type="evidence" value="ECO:0000315"/>
    <property type="project" value="TAIR"/>
</dbReference>
<dbReference type="GO" id="GO:0051726">
    <property type="term" value="P:regulation of cell cycle"/>
    <property type="evidence" value="ECO:0000315"/>
    <property type="project" value="TAIR"/>
</dbReference>
<dbReference type="GO" id="GO:0042127">
    <property type="term" value="P:regulation of cell population proliferation"/>
    <property type="evidence" value="ECO:0000315"/>
    <property type="project" value="TAIR"/>
</dbReference>
<dbReference type="CDD" id="cd21089">
    <property type="entry name" value="Trm112-like"/>
    <property type="match status" value="1"/>
</dbReference>
<dbReference type="FunFam" id="2.20.25.10:FF:000018">
    <property type="entry name" value="Multifunctional methyltransferase subunit TRM112-like B"/>
    <property type="match status" value="1"/>
</dbReference>
<dbReference type="Gene3D" id="2.20.25.10">
    <property type="match status" value="1"/>
</dbReference>
<dbReference type="InterPro" id="IPR039127">
    <property type="entry name" value="Trm112"/>
</dbReference>
<dbReference type="InterPro" id="IPR005651">
    <property type="entry name" value="Trm112-like"/>
</dbReference>
<dbReference type="PANTHER" id="PTHR12773:SF0">
    <property type="entry name" value="MULTIFUNCTIONAL METHYLTRANSFERASE SUBUNIT TRM112-LIKE PROTEIN"/>
    <property type="match status" value="1"/>
</dbReference>
<dbReference type="PANTHER" id="PTHR12773">
    <property type="entry name" value="UPF0315 PROTEIN-RELATED"/>
    <property type="match status" value="1"/>
</dbReference>
<dbReference type="Pfam" id="PF03966">
    <property type="entry name" value="Trm112p"/>
    <property type="match status" value="1"/>
</dbReference>
<dbReference type="SUPFAM" id="SSF158997">
    <property type="entry name" value="Trm112p-like"/>
    <property type="match status" value="1"/>
</dbReference>